<protein>
    <recommendedName>
        <fullName>Protease HtpX homolog</fullName>
        <ecNumber>3.4.24.-</ecNumber>
    </recommendedName>
</protein>
<organism>
    <name type="scientific">Mycobacterium tuberculosis (strain CDC 1551 / Oshkosh)</name>
    <dbReference type="NCBI Taxonomy" id="83331"/>
    <lineage>
        <taxon>Bacteria</taxon>
        <taxon>Bacillati</taxon>
        <taxon>Actinomycetota</taxon>
        <taxon>Actinomycetes</taxon>
        <taxon>Mycobacteriales</taxon>
        <taxon>Mycobacteriaceae</taxon>
        <taxon>Mycobacterium</taxon>
        <taxon>Mycobacterium tuberculosis complex</taxon>
    </lineage>
</organism>
<name>HTPX_MYCTO</name>
<gene>
    <name type="primary">htpX</name>
    <name type="ordered locus">MT0589</name>
</gene>
<sequence length="286" mass="30682">MTWHPHANRLKTFLLLVGMSALIVAVGALFGRTALMLAALFAVGMNVYVYFNSDKLALRAMHAQPVSELQAPAMYRIVRELATSAHQPMPRLYISDTAAPNAFATGRNPRNAAVCCTTGILRILNERELRAVLGHELSHVYNRDILISCVAGALAAVITALANMAMWAGMFGGNRDNANPFALLLVALLGPIAATVIRMAVSRSREYQADESGAVLTGDPLALASALRKISGGVQAAPLPPEPQLASQAHLMIANPFRAGERIGSLFSTHPPIEDRIRRLEAMARG</sequence>
<feature type="chain" id="PRO_0000428132" description="Protease HtpX homolog">
    <location>
        <begin position="1"/>
        <end position="286"/>
    </location>
</feature>
<feature type="transmembrane region" description="Helical" evidence="2">
    <location>
        <begin position="10"/>
        <end position="30"/>
    </location>
</feature>
<feature type="transmembrane region" description="Helical" evidence="2">
    <location>
        <begin position="33"/>
        <end position="53"/>
    </location>
</feature>
<feature type="transmembrane region" description="Helical" evidence="2">
    <location>
        <begin position="145"/>
        <end position="165"/>
    </location>
</feature>
<feature type="transmembrane region" description="Helical" evidence="2">
    <location>
        <begin position="181"/>
        <end position="201"/>
    </location>
</feature>
<feature type="active site" evidence="1">
    <location>
        <position position="136"/>
    </location>
</feature>
<feature type="binding site" evidence="1">
    <location>
        <position position="135"/>
    </location>
    <ligand>
        <name>Zn(2+)</name>
        <dbReference type="ChEBI" id="CHEBI:29105"/>
        <note>catalytic</note>
    </ligand>
</feature>
<feature type="binding site" evidence="1">
    <location>
        <position position="139"/>
    </location>
    <ligand>
        <name>Zn(2+)</name>
        <dbReference type="ChEBI" id="CHEBI:29105"/>
        <note>catalytic</note>
    </ligand>
</feature>
<feature type="binding site" evidence="1">
    <location>
        <position position="206"/>
    </location>
    <ligand>
        <name>Zn(2+)</name>
        <dbReference type="ChEBI" id="CHEBI:29105"/>
        <note>catalytic</note>
    </ligand>
</feature>
<comment type="cofactor">
    <cofactor evidence="1">
        <name>Zn(2+)</name>
        <dbReference type="ChEBI" id="CHEBI:29105"/>
    </cofactor>
    <text evidence="1">Binds 1 zinc ion per subunit.</text>
</comment>
<comment type="subcellular location">
    <subcellularLocation>
        <location evidence="1">Cell membrane</location>
        <topology evidence="1">Multi-pass membrane protein</topology>
    </subcellularLocation>
</comment>
<comment type="similarity">
    <text evidence="3">Belongs to the peptidase M48B family.</text>
</comment>
<evidence type="ECO:0000250" key="1"/>
<evidence type="ECO:0000255" key="2"/>
<evidence type="ECO:0000305" key="3"/>
<keyword id="KW-1003">Cell membrane</keyword>
<keyword id="KW-0378">Hydrolase</keyword>
<keyword id="KW-0472">Membrane</keyword>
<keyword id="KW-0479">Metal-binding</keyword>
<keyword id="KW-0482">Metalloprotease</keyword>
<keyword id="KW-0645">Protease</keyword>
<keyword id="KW-1185">Reference proteome</keyword>
<keyword id="KW-0812">Transmembrane</keyword>
<keyword id="KW-1133">Transmembrane helix</keyword>
<keyword id="KW-0862">Zinc</keyword>
<accession>P9WHS4</accession>
<accession>L0T459</accession>
<accession>O06429</accession>
<accession>P65815</accession>
<dbReference type="EC" id="3.4.24.-"/>
<dbReference type="EMBL" id="AE000516">
    <property type="protein sequence ID" value="AAK44812.1"/>
    <property type="molecule type" value="Genomic_DNA"/>
</dbReference>
<dbReference type="PIR" id="F70549">
    <property type="entry name" value="F70549"/>
</dbReference>
<dbReference type="RefSeq" id="WP_003402959.1">
    <property type="nucleotide sequence ID" value="NZ_KK341227.1"/>
</dbReference>
<dbReference type="KEGG" id="mtc:MT0589"/>
<dbReference type="PATRIC" id="fig|83331.31.peg.620"/>
<dbReference type="HOGENOM" id="CLU_042266_3_1_11"/>
<dbReference type="Proteomes" id="UP000001020">
    <property type="component" value="Chromosome"/>
</dbReference>
<dbReference type="GO" id="GO:0005886">
    <property type="term" value="C:plasma membrane"/>
    <property type="evidence" value="ECO:0007669"/>
    <property type="project" value="UniProtKB-SubCell"/>
</dbReference>
<dbReference type="GO" id="GO:0004222">
    <property type="term" value="F:metalloendopeptidase activity"/>
    <property type="evidence" value="ECO:0007669"/>
    <property type="project" value="UniProtKB-UniRule"/>
</dbReference>
<dbReference type="GO" id="GO:0008270">
    <property type="term" value="F:zinc ion binding"/>
    <property type="evidence" value="ECO:0007669"/>
    <property type="project" value="UniProtKB-UniRule"/>
</dbReference>
<dbReference type="GO" id="GO:0006508">
    <property type="term" value="P:proteolysis"/>
    <property type="evidence" value="ECO:0007669"/>
    <property type="project" value="UniProtKB-KW"/>
</dbReference>
<dbReference type="CDD" id="cd07336">
    <property type="entry name" value="M48B_HtpX_like"/>
    <property type="match status" value="1"/>
</dbReference>
<dbReference type="FunFam" id="3.30.2010.10:FF:000008">
    <property type="entry name" value="Protease HtpX homolog"/>
    <property type="match status" value="1"/>
</dbReference>
<dbReference type="Gene3D" id="3.30.2010.10">
    <property type="entry name" value="Metalloproteases ('zincins'), catalytic domain"/>
    <property type="match status" value="1"/>
</dbReference>
<dbReference type="HAMAP" id="MF_00188">
    <property type="entry name" value="Pept_M48_protease_HtpX"/>
    <property type="match status" value="1"/>
</dbReference>
<dbReference type="InterPro" id="IPR050083">
    <property type="entry name" value="HtpX_protease"/>
</dbReference>
<dbReference type="InterPro" id="IPR022919">
    <property type="entry name" value="Pept_M48_protease_HtpX"/>
</dbReference>
<dbReference type="InterPro" id="IPR001915">
    <property type="entry name" value="Peptidase_M48"/>
</dbReference>
<dbReference type="NCBIfam" id="NF002839">
    <property type="entry name" value="PRK03072.1"/>
    <property type="match status" value="1"/>
</dbReference>
<dbReference type="PANTHER" id="PTHR43221">
    <property type="entry name" value="PROTEASE HTPX"/>
    <property type="match status" value="1"/>
</dbReference>
<dbReference type="PANTHER" id="PTHR43221:SF1">
    <property type="entry name" value="PROTEASE HTPX"/>
    <property type="match status" value="1"/>
</dbReference>
<dbReference type="Pfam" id="PF01435">
    <property type="entry name" value="Peptidase_M48"/>
    <property type="match status" value="1"/>
</dbReference>
<dbReference type="PROSITE" id="PS00142">
    <property type="entry name" value="ZINC_PROTEASE"/>
    <property type="match status" value="1"/>
</dbReference>
<reference key="1">
    <citation type="journal article" date="2002" name="J. Bacteriol.">
        <title>Whole-genome comparison of Mycobacterium tuberculosis clinical and laboratory strains.</title>
        <authorList>
            <person name="Fleischmann R.D."/>
            <person name="Alland D."/>
            <person name="Eisen J.A."/>
            <person name="Carpenter L."/>
            <person name="White O."/>
            <person name="Peterson J.D."/>
            <person name="DeBoy R.T."/>
            <person name="Dodson R.J."/>
            <person name="Gwinn M.L."/>
            <person name="Haft D.H."/>
            <person name="Hickey E.K."/>
            <person name="Kolonay J.F."/>
            <person name="Nelson W.C."/>
            <person name="Umayam L.A."/>
            <person name="Ermolaeva M.D."/>
            <person name="Salzberg S.L."/>
            <person name="Delcher A."/>
            <person name="Utterback T.R."/>
            <person name="Weidman J.F."/>
            <person name="Khouri H.M."/>
            <person name="Gill J."/>
            <person name="Mikula A."/>
            <person name="Bishai W."/>
            <person name="Jacobs W.R. Jr."/>
            <person name="Venter J.C."/>
            <person name="Fraser C.M."/>
        </authorList>
    </citation>
    <scope>NUCLEOTIDE SEQUENCE [LARGE SCALE GENOMIC DNA]</scope>
    <source>
        <strain>CDC 1551 / Oshkosh</strain>
    </source>
</reference>
<proteinExistence type="inferred from homology"/>